<reference key="1">
    <citation type="journal article" date="2006" name="Dev. Biol.">
        <title>Sohlh1 is essential for spermatogonial differentiation.</title>
        <authorList>
            <person name="Ballow D."/>
            <person name="Meistrich M.L."/>
            <person name="Matzuk M."/>
            <person name="Rajkovic A."/>
        </authorList>
    </citation>
    <scope>NUCLEOTIDE SEQUENCE [MRNA]</scope>
    <scope>VARIANTS GLN-37 AND SER-269</scope>
</reference>
<reference key="2">
    <citation type="journal article" date="2004" name="Nature">
        <title>DNA sequence and analysis of human chromosome 9.</title>
        <authorList>
            <person name="Humphray S.J."/>
            <person name="Oliver K."/>
            <person name="Hunt A.R."/>
            <person name="Plumb R.W."/>
            <person name="Loveland J.E."/>
            <person name="Howe K.L."/>
            <person name="Andrews T.D."/>
            <person name="Searle S."/>
            <person name="Hunt S.E."/>
            <person name="Scott C.E."/>
            <person name="Jones M.C."/>
            <person name="Ainscough R."/>
            <person name="Almeida J.P."/>
            <person name="Ambrose K.D."/>
            <person name="Ashwell R.I.S."/>
            <person name="Babbage A.K."/>
            <person name="Babbage S."/>
            <person name="Bagguley C.L."/>
            <person name="Bailey J."/>
            <person name="Banerjee R."/>
            <person name="Barker D.J."/>
            <person name="Barlow K.F."/>
            <person name="Bates K."/>
            <person name="Beasley H."/>
            <person name="Beasley O."/>
            <person name="Bird C.P."/>
            <person name="Bray-Allen S."/>
            <person name="Brown A.J."/>
            <person name="Brown J.Y."/>
            <person name="Burford D."/>
            <person name="Burrill W."/>
            <person name="Burton J."/>
            <person name="Carder C."/>
            <person name="Carter N.P."/>
            <person name="Chapman J.C."/>
            <person name="Chen Y."/>
            <person name="Clarke G."/>
            <person name="Clark S.Y."/>
            <person name="Clee C.M."/>
            <person name="Clegg S."/>
            <person name="Collier R.E."/>
            <person name="Corby N."/>
            <person name="Crosier M."/>
            <person name="Cummings A.T."/>
            <person name="Davies J."/>
            <person name="Dhami P."/>
            <person name="Dunn M."/>
            <person name="Dutta I."/>
            <person name="Dyer L.W."/>
            <person name="Earthrowl M.E."/>
            <person name="Faulkner L."/>
            <person name="Fleming C.J."/>
            <person name="Frankish A."/>
            <person name="Frankland J.A."/>
            <person name="French L."/>
            <person name="Fricker D.G."/>
            <person name="Garner P."/>
            <person name="Garnett J."/>
            <person name="Ghori J."/>
            <person name="Gilbert J.G.R."/>
            <person name="Glison C."/>
            <person name="Grafham D.V."/>
            <person name="Gribble S."/>
            <person name="Griffiths C."/>
            <person name="Griffiths-Jones S."/>
            <person name="Grocock R."/>
            <person name="Guy J."/>
            <person name="Hall R.E."/>
            <person name="Hammond S."/>
            <person name="Harley J.L."/>
            <person name="Harrison E.S.I."/>
            <person name="Hart E.A."/>
            <person name="Heath P.D."/>
            <person name="Henderson C.D."/>
            <person name="Hopkins B.L."/>
            <person name="Howard P.J."/>
            <person name="Howden P.J."/>
            <person name="Huckle E."/>
            <person name="Johnson C."/>
            <person name="Johnson D."/>
            <person name="Joy A.A."/>
            <person name="Kay M."/>
            <person name="Keenan S."/>
            <person name="Kershaw J.K."/>
            <person name="Kimberley A.M."/>
            <person name="King A."/>
            <person name="Knights A."/>
            <person name="Laird G.K."/>
            <person name="Langford C."/>
            <person name="Lawlor S."/>
            <person name="Leongamornlert D.A."/>
            <person name="Leversha M."/>
            <person name="Lloyd C."/>
            <person name="Lloyd D.M."/>
            <person name="Lovell J."/>
            <person name="Martin S."/>
            <person name="Mashreghi-Mohammadi M."/>
            <person name="Matthews L."/>
            <person name="McLaren S."/>
            <person name="McLay K.E."/>
            <person name="McMurray A."/>
            <person name="Milne S."/>
            <person name="Nickerson T."/>
            <person name="Nisbett J."/>
            <person name="Nordsiek G."/>
            <person name="Pearce A.V."/>
            <person name="Peck A.I."/>
            <person name="Porter K.M."/>
            <person name="Pandian R."/>
            <person name="Pelan S."/>
            <person name="Phillimore B."/>
            <person name="Povey S."/>
            <person name="Ramsey Y."/>
            <person name="Rand V."/>
            <person name="Scharfe M."/>
            <person name="Sehra H.K."/>
            <person name="Shownkeen R."/>
            <person name="Sims S.K."/>
            <person name="Skuce C.D."/>
            <person name="Smith M."/>
            <person name="Steward C.A."/>
            <person name="Swarbreck D."/>
            <person name="Sycamore N."/>
            <person name="Tester J."/>
            <person name="Thorpe A."/>
            <person name="Tracey A."/>
            <person name="Tromans A."/>
            <person name="Thomas D.W."/>
            <person name="Wall M."/>
            <person name="Wallis J.M."/>
            <person name="West A.P."/>
            <person name="Whitehead S.L."/>
            <person name="Willey D.L."/>
            <person name="Williams S.A."/>
            <person name="Wilming L."/>
            <person name="Wray P.W."/>
            <person name="Young L."/>
            <person name="Ashurst J.L."/>
            <person name="Coulson A."/>
            <person name="Blocker H."/>
            <person name="Durbin R.M."/>
            <person name="Sulston J.E."/>
            <person name="Hubbard T."/>
            <person name="Jackson M.J."/>
            <person name="Bentley D.R."/>
            <person name="Beck S."/>
            <person name="Rogers J."/>
            <person name="Dunham I."/>
        </authorList>
    </citation>
    <scope>NUCLEOTIDE SEQUENCE [LARGE SCALE GENOMIC DNA]</scope>
</reference>
<reference key="3">
    <citation type="submission" date="2005-07" db="EMBL/GenBank/DDBJ databases">
        <authorList>
            <person name="Mural R.J."/>
            <person name="Istrail S."/>
            <person name="Sutton G.G."/>
            <person name="Florea L."/>
            <person name="Halpern A.L."/>
            <person name="Mobarry C.M."/>
            <person name="Lippert R."/>
            <person name="Walenz B."/>
            <person name="Shatkay H."/>
            <person name="Dew I."/>
            <person name="Miller J.R."/>
            <person name="Flanigan M.J."/>
            <person name="Edwards N.J."/>
            <person name="Bolanos R."/>
            <person name="Fasulo D."/>
            <person name="Halldorsson B.V."/>
            <person name="Hannenhalli S."/>
            <person name="Turner R."/>
            <person name="Yooseph S."/>
            <person name="Lu F."/>
            <person name="Nusskern D.R."/>
            <person name="Shue B.C."/>
            <person name="Zheng X.H."/>
            <person name="Zhong F."/>
            <person name="Delcher A.L."/>
            <person name="Huson D.H."/>
            <person name="Kravitz S.A."/>
            <person name="Mouchard L."/>
            <person name="Reinert K."/>
            <person name="Remington K.A."/>
            <person name="Clark A.G."/>
            <person name="Waterman M.S."/>
            <person name="Eichler E.E."/>
            <person name="Adams M.D."/>
            <person name="Hunkapiller M.W."/>
            <person name="Myers E.W."/>
            <person name="Venter J.C."/>
        </authorList>
    </citation>
    <scope>NUCLEOTIDE SEQUENCE [LARGE SCALE GENOMIC DNA]</scope>
    <scope>VARIANTS GLN-37 AND SER-269</scope>
</reference>
<reference key="4">
    <citation type="journal article" date="2004" name="Genome Res.">
        <title>The status, quality, and expansion of the NIH full-length cDNA project: the Mammalian Gene Collection (MGC).</title>
        <authorList>
            <consortium name="The MGC Project Team"/>
        </authorList>
    </citation>
    <scope>NUCLEOTIDE SEQUENCE [LARGE SCALE MRNA]</scope>
    <scope>VARIANTS GLN-37 AND SER-269</scope>
    <source>
        <tissue>Testis</tissue>
    </source>
</reference>
<reference key="5">
    <citation type="submission" date="2005-01" db="EMBL/GenBank/DDBJ databases">
        <title>Identification and functional characterization of two novel bHLH family members.</title>
        <authorList>
            <person name="Smas C.M."/>
        </authorList>
    </citation>
    <scope>NUCLEOTIDE SEQUENCE [MRNA] OF 1-215</scope>
</reference>
<reference key="6">
    <citation type="journal article" date="2004" name="Nat. Genet.">
        <title>Complete sequencing and characterization of 21,243 full-length human cDNAs.</title>
        <authorList>
            <person name="Ota T."/>
            <person name="Suzuki Y."/>
            <person name="Nishikawa T."/>
            <person name="Otsuki T."/>
            <person name="Sugiyama T."/>
            <person name="Irie R."/>
            <person name="Wakamatsu A."/>
            <person name="Hayashi K."/>
            <person name="Sato H."/>
            <person name="Nagai K."/>
            <person name="Kimura K."/>
            <person name="Makita H."/>
            <person name="Sekine M."/>
            <person name="Obayashi M."/>
            <person name="Nishi T."/>
            <person name="Shibahara T."/>
            <person name="Tanaka T."/>
            <person name="Ishii S."/>
            <person name="Yamamoto J."/>
            <person name="Saito K."/>
            <person name="Kawai Y."/>
            <person name="Isono Y."/>
            <person name="Nakamura Y."/>
            <person name="Nagahari K."/>
            <person name="Murakami K."/>
            <person name="Yasuda T."/>
            <person name="Iwayanagi T."/>
            <person name="Wagatsuma M."/>
            <person name="Shiratori A."/>
            <person name="Sudo H."/>
            <person name="Hosoiri T."/>
            <person name="Kaku Y."/>
            <person name="Kodaira H."/>
            <person name="Kondo H."/>
            <person name="Sugawara M."/>
            <person name="Takahashi M."/>
            <person name="Kanda K."/>
            <person name="Yokoi T."/>
            <person name="Furuya T."/>
            <person name="Kikkawa E."/>
            <person name="Omura Y."/>
            <person name="Abe K."/>
            <person name="Kamihara K."/>
            <person name="Katsuta N."/>
            <person name="Sato K."/>
            <person name="Tanikawa M."/>
            <person name="Yamazaki M."/>
            <person name="Ninomiya K."/>
            <person name="Ishibashi T."/>
            <person name="Yamashita H."/>
            <person name="Murakawa K."/>
            <person name="Fujimori K."/>
            <person name="Tanai H."/>
            <person name="Kimata M."/>
            <person name="Watanabe M."/>
            <person name="Hiraoka S."/>
            <person name="Chiba Y."/>
            <person name="Ishida S."/>
            <person name="Ono Y."/>
            <person name="Takiguchi S."/>
            <person name="Watanabe S."/>
            <person name="Yosida M."/>
            <person name="Hotuta T."/>
            <person name="Kusano J."/>
            <person name="Kanehori K."/>
            <person name="Takahashi-Fujii A."/>
            <person name="Hara H."/>
            <person name="Tanase T.-O."/>
            <person name="Nomura Y."/>
            <person name="Togiya S."/>
            <person name="Komai F."/>
            <person name="Hara R."/>
            <person name="Takeuchi K."/>
            <person name="Arita M."/>
            <person name="Imose N."/>
            <person name="Musashino K."/>
            <person name="Yuuki H."/>
            <person name="Oshima A."/>
            <person name="Sasaki N."/>
            <person name="Aotsuka S."/>
            <person name="Yoshikawa Y."/>
            <person name="Matsunawa H."/>
            <person name="Ichihara T."/>
            <person name="Shiohata N."/>
            <person name="Sano S."/>
            <person name="Moriya S."/>
            <person name="Momiyama H."/>
            <person name="Satoh N."/>
            <person name="Takami S."/>
            <person name="Terashima Y."/>
            <person name="Suzuki O."/>
            <person name="Nakagawa S."/>
            <person name="Senoh A."/>
            <person name="Mizoguchi H."/>
            <person name="Goto Y."/>
            <person name="Shimizu F."/>
            <person name="Wakebe H."/>
            <person name="Hishigaki H."/>
            <person name="Watanabe T."/>
            <person name="Sugiyama A."/>
            <person name="Takemoto M."/>
            <person name="Kawakami B."/>
            <person name="Yamazaki M."/>
            <person name="Watanabe K."/>
            <person name="Kumagai A."/>
            <person name="Itakura S."/>
            <person name="Fukuzumi Y."/>
            <person name="Fujimori Y."/>
            <person name="Komiyama M."/>
            <person name="Tashiro H."/>
            <person name="Tanigami A."/>
            <person name="Fujiwara T."/>
            <person name="Ono T."/>
            <person name="Yamada K."/>
            <person name="Fujii Y."/>
            <person name="Ozaki K."/>
            <person name="Hirao M."/>
            <person name="Ohmori Y."/>
            <person name="Kawabata A."/>
            <person name="Hikiji T."/>
            <person name="Kobatake N."/>
            <person name="Inagaki H."/>
            <person name="Ikema Y."/>
            <person name="Okamoto S."/>
            <person name="Okitani R."/>
            <person name="Kawakami T."/>
            <person name="Noguchi S."/>
            <person name="Itoh T."/>
            <person name="Shigeta K."/>
            <person name="Senba T."/>
            <person name="Matsumura K."/>
            <person name="Nakajima Y."/>
            <person name="Mizuno T."/>
            <person name="Morinaga M."/>
            <person name="Sasaki M."/>
            <person name="Togashi T."/>
            <person name="Oyama M."/>
            <person name="Hata H."/>
            <person name="Watanabe M."/>
            <person name="Komatsu T."/>
            <person name="Mizushima-Sugano J."/>
            <person name="Satoh T."/>
            <person name="Shirai Y."/>
            <person name="Takahashi Y."/>
            <person name="Nakagawa K."/>
            <person name="Okumura K."/>
            <person name="Nagase T."/>
            <person name="Nomura N."/>
            <person name="Kikuchi H."/>
            <person name="Masuho Y."/>
            <person name="Yamashita R."/>
            <person name="Nakai K."/>
            <person name="Yada T."/>
            <person name="Nakamura Y."/>
            <person name="Ohara O."/>
            <person name="Isogai T."/>
            <person name="Sugano S."/>
        </authorList>
    </citation>
    <scope>NUCLEOTIDE SEQUENCE [LARGE SCALE MRNA] OF 279-328 (ISOFORM 2)</scope>
</reference>
<reference key="7">
    <citation type="journal article" date="2010" name="Hum. Mutat.">
        <title>Mutations in SOHLH1 gene associate with nonobstructive azoospermia.</title>
        <authorList>
            <person name="Choi Y."/>
            <person name="Jeon S."/>
            <person name="Choi M."/>
            <person name="Lee M.-H."/>
            <person name="Park M."/>
            <person name="Lee D.R."/>
            <person name="Jun K.-Y."/>
            <person name="Kwon Y."/>
            <person name="Lee O.-H."/>
            <person name="Song S.-H."/>
            <person name="Kim J.-Y."/>
            <person name="Lee K.-A."/>
            <person name="Yoon T.K."/>
            <person name="Rajkovic A."/>
            <person name="Shim S.H."/>
        </authorList>
    </citation>
    <scope>FUNCTION</scope>
    <scope>INVOLVEMENT IN SPGF32</scope>
    <scope>VARIANTS SPGF32 ARG-31; GLN-37; THR-177 AND SER-269</scope>
    <scope>CHARACTERIZATION OF VARIANTS SPGF32 ARG-31 AND THR-177</scope>
</reference>
<reference key="8">
    <citation type="journal article" date="2015" name="J. Clin. Endocrinol. Metab.">
        <title>Homozygous loss-of-function mutations in SOHLH1 in patients with nonsyndromic hypergonadotropic hypogonadism.</title>
        <authorList>
            <person name="Bayram Y."/>
            <person name="Gulsuner S."/>
            <person name="Guran T."/>
            <person name="Abaci A."/>
            <person name="Yesil G."/>
            <person name="Gulsuner H.U."/>
            <person name="Atay Z."/>
            <person name="Pierce S.B."/>
            <person name="Gambin T."/>
            <person name="Lee M."/>
            <person name="Turan S."/>
            <person name="Bober E."/>
            <person name="Atik M.M."/>
            <person name="Walsh T."/>
            <person name="Karaca E."/>
            <person name="Pehlivan D."/>
            <person name="Jhangiani S.N."/>
            <person name="Muzny D."/>
            <person name="Bereket A."/>
            <person name="Buyukgebiz A."/>
            <person name="Boerwinkle E."/>
            <person name="Gibbs R.A."/>
            <person name="King M.C."/>
            <person name="Lupski J.R."/>
        </authorList>
    </citation>
    <scope>INVOLVEMENT IN ODG5</scope>
    <scope>VARIANT ODG5 9-TYR--ALA-328 DEL</scope>
</reference>
<reference key="9">
    <citation type="journal article" date="2017" name="Andrology">
        <title>Next-generation sequencing for patients with non-obstructive azoospermia: implications for significant roles of monogenic/oligogenic mutations.</title>
        <authorList>
            <person name="Nakamura S."/>
            <person name="Miyado M."/>
            <person name="Saito K."/>
            <person name="Katsumi M."/>
            <person name="Nakamura A."/>
            <person name="Kobori Y."/>
            <person name="Tanaka Y."/>
            <person name="Ishikawa H."/>
            <person name="Yoshida A."/>
            <person name="Okada H."/>
            <person name="Hata K."/>
            <person name="Nakabayashi K."/>
            <person name="Okamura K."/>
            <person name="Ogata H."/>
            <person name="Matsubara Y."/>
            <person name="Ogata T."/>
            <person name="Nakai H."/>
            <person name="Fukami M."/>
        </authorList>
    </citation>
    <scope>INVOLVEMENT IN SPGF32</scope>
</reference>
<comment type="function">
    <text evidence="1 2 7">Transcription regulator of both male and female germline differentiation. Suppresses genes involved in spermatogonial stem cells maintenance, and induces genes important for spermatogonial differentiation. Coordinates oocyte differentiation without affecting meiosis I (By similarity).</text>
</comment>
<comment type="subunit">
    <text evidence="1">Forms both hetero- and homodimers with SOHLH2.</text>
</comment>
<comment type="interaction">
    <interactant intactId="EBI-12288855">
        <id>Q5JUK2</id>
    </interactant>
    <interactant intactId="EBI-2880652">
        <id>Q08043</id>
        <label>ACTN3</label>
    </interactant>
    <organismsDiffer>false</organismsDiffer>
    <experiments>3</experiments>
</comment>
<comment type="interaction">
    <interactant intactId="EBI-12288855">
        <id>Q5JUK2</id>
    </interactant>
    <interactant intactId="EBI-948603">
        <id>Q03989</id>
        <label>ARID5A</label>
    </interactant>
    <organismsDiffer>false</organismsDiffer>
    <experiments>3</experiments>
</comment>
<comment type="interaction">
    <interactant intactId="EBI-12288855">
        <id>Q5JUK2</id>
    </interactant>
    <interactant intactId="EBI-12809220">
        <id>Q5SWW7</id>
        <label>C10orf55</label>
    </interactant>
    <organismsDiffer>false</organismsDiffer>
    <experiments>3</experiments>
</comment>
<comment type="interaction">
    <interactant intactId="EBI-12288855">
        <id>Q5JUK2</id>
    </interactant>
    <interactant intactId="EBI-524064">
        <id>P42574</id>
        <label>CASP3</label>
    </interactant>
    <organismsDiffer>false</organismsDiffer>
    <experiments>3</experiments>
</comment>
<comment type="interaction">
    <interactant intactId="EBI-12288855">
        <id>Q5JUK2</id>
    </interactant>
    <interactant intactId="EBI-12261896">
        <id>Q5T4B2</id>
        <label>CERCAM</label>
    </interactant>
    <organismsDiffer>false</organismsDiffer>
    <experiments>3</experiments>
</comment>
<comment type="interaction">
    <interactant intactId="EBI-12288855">
        <id>Q5JUK2</id>
    </interactant>
    <interactant intactId="EBI-1188472">
        <id>P78358</id>
        <label>CTAG1B</label>
    </interactant>
    <organismsDiffer>false</organismsDiffer>
    <experiments>5</experiments>
</comment>
<comment type="interaction">
    <interactant intactId="EBI-12288855">
        <id>Q5JUK2</id>
    </interactant>
    <interactant intactId="EBI-740376">
        <id>Q86UW9</id>
        <label>DTX2</label>
    </interactant>
    <organismsDiffer>false</organismsDiffer>
    <experiments>3</experiments>
</comment>
<comment type="interaction">
    <interactant intactId="EBI-12288855">
        <id>Q5JUK2</id>
    </interactant>
    <interactant intactId="EBI-2807642">
        <id>Q8WU58</id>
        <label>FAM222B</label>
    </interactant>
    <organismsDiffer>false</organismsDiffer>
    <experiments>3</experiments>
</comment>
<comment type="interaction">
    <interactant intactId="EBI-12288855">
        <id>Q5JUK2</id>
    </interactant>
    <interactant intactId="EBI-10329202">
        <id>Q9Y5R4</id>
        <label>HEMK1</label>
    </interactant>
    <organismsDiffer>false</organismsDiffer>
    <experiments>3</experiments>
</comment>
<comment type="interaction">
    <interactant intactId="EBI-12288855">
        <id>Q5JUK2</id>
    </interactant>
    <interactant intactId="EBI-17178971">
        <id>Q14005-2</id>
        <label>IL16</label>
    </interactant>
    <organismsDiffer>false</organismsDiffer>
    <experiments>3</experiments>
</comment>
<comment type="interaction">
    <interactant intactId="EBI-12288855">
        <id>Q5JUK2</id>
    </interactant>
    <interactant intactId="EBI-1048945">
        <id>Q3LI72</id>
        <label>KRTAP19-5</label>
    </interactant>
    <organismsDiffer>false</organismsDiffer>
    <experiments>3</experiments>
</comment>
<comment type="interaction">
    <interactant intactId="EBI-12288855">
        <id>Q5JUK2</id>
    </interactant>
    <interactant intactId="EBI-741048">
        <id>Q7Z3B4</id>
        <label>NUP54</label>
    </interactant>
    <organismsDiffer>false</organismsDiffer>
    <experiments>3</experiments>
</comment>
<comment type="interaction">
    <interactant intactId="EBI-12288855">
        <id>Q5JUK2</id>
    </interactant>
    <interactant intactId="EBI-536879">
        <id>O43482</id>
        <label>OIP5</label>
    </interactant>
    <organismsDiffer>false</organismsDiffer>
    <experiments>3</experiments>
</comment>
<comment type="interaction">
    <interactant intactId="EBI-12288855">
        <id>Q5JUK2</id>
    </interactant>
    <interactant intactId="EBI-724639">
        <id>Q9UBV8</id>
        <label>PEF1</label>
    </interactant>
    <organismsDiffer>false</organismsDiffer>
    <experiments>3</experiments>
</comment>
<comment type="interaction">
    <interactant intactId="EBI-12288855">
        <id>Q5JUK2</id>
    </interactant>
    <interactant intactId="EBI-357275">
        <id>Q99471</id>
        <label>PFDN5</label>
    </interactant>
    <organismsDiffer>false</organismsDiffer>
    <experiments>3</experiments>
</comment>
<comment type="interaction">
    <interactant intactId="EBI-12288855">
        <id>Q5JUK2</id>
    </interactant>
    <interactant intactId="EBI-1383852">
        <id>P54646</id>
        <label>PRKAA2</label>
    </interactant>
    <organismsDiffer>false</organismsDiffer>
    <experiments>3</experiments>
</comment>
<comment type="interaction">
    <interactant intactId="EBI-12288855">
        <id>Q5JUK2</id>
    </interactant>
    <interactant intactId="EBI-603350">
        <id>P28070</id>
        <label>PSMB4</label>
    </interactant>
    <organismsDiffer>false</organismsDiffer>
    <experiments>3</experiments>
</comment>
<comment type="interaction">
    <interactant intactId="EBI-12288855">
        <id>Q5JUK2</id>
    </interactant>
    <interactant intactId="EBI-6257312">
        <id>Q9BVN2</id>
        <label>RUSC1</label>
    </interactant>
    <organismsDiffer>false</organismsDiffer>
    <experiments>3</experiments>
</comment>
<comment type="interaction">
    <interactant intactId="EBI-12288855">
        <id>Q5JUK2</id>
    </interactant>
    <interactant intactId="EBI-12843506">
        <id>Q8IWL8</id>
        <label>STH</label>
    </interactant>
    <organismsDiffer>false</organismsDiffer>
    <experiments>3</experiments>
</comment>
<comment type="interaction">
    <interactant intactId="EBI-12288855">
        <id>Q5JUK2</id>
    </interactant>
    <interactant intactId="EBI-3921347">
        <id>P51687</id>
        <label>SUOX</label>
    </interactant>
    <organismsDiffer>false</organismsDiffer>
    <experiments>3</experiments>
</comment>
<comment type="interaction">
    <interactant intactId="EBI-12288855">
        <id>Q5JUK2</id>
    </interactant>
    <interactant intactId="EBI-752030">
        <id>Q96A09</id>
        <label>TENT5B</label>
    </interactant>
    <organismsDiffer>false</organismsDiffer>
    <experiments>3</experiments>
</comment>
<comment type="interaction">
    <interactant intactId="EBI-12288855">
        <id>Q5JUK2</id>
    </interactant>
    <interactant intactId="EBI-11741437">
        <id>Q08117-2</id>
        <label>TLE5</label>
    </interactant>
    <organismsDiffer>false</organismsDiffer>
    <experiments>3</experiments>
</comment>
<comment type="interaction">
    <interactant intactId="EBI-12288855">
        <id>Q5JUK2</id>
    </interactant>
    <interactant intactId="EBI-359224">
        <id>Q13077</id>
        <label>TRAF1</label>
    </interactant>
    <organismsDiffer>false</organismsDiffer>
    <experiments>3</experiments>
</comment>
<comment type="interaction">
    <interactant intactId="EBI-12288855">
        <id>Q5JUK2</id>
    </interactant>
    <interactant intactId="EBI-739895">
        <id>Q8N6Y0</id>
        <label>USHBP1</label>
    </interactant>
    <organismsDiffer>false</organismsDiffer>
    <experiments>3</experiments>
</comment>
<comment type="interaction">
    <interactant intactId="EBI-12288855">
        <id>Q5JUK2</id>
    </interactant>
    <interactant intactId="EBI-12030590">
        <id>Q9H0C1</id>
        <label>ZMYND12</label>
    </interactant>
    <organismsDiffer>false</organismsDiffer>
    <experiments>3</experiments>
</comment>
<comment type="subcellular location">
    <subcellularLocation>
        <location evidence="1">Cytoplasm</location>
    </subcellularLocation>
    <subcellularLocation>
        <location evidence="1 3">Nucleus</location>
    </subcellularLocation>
</comment>
<comment type="alternative products">
    <event type="alternative splicing"/>
    <isoform>
        <id>Q5JUK2-1</id>
        <name>1</name>
        <sequence type="displayed"/>
    </isoform>
    <isoform>
        <id>Q5JUK2-2</id>
        <name>2</name>
        <sequence type="described" ref="VSP_039904"/>
    </isoform>
</comment>
<comment type="disease" evidence="7 9">
    <disease id="DI-05325">
        <name>Spermatogenic failure 32</name>
        <acronym>SPGF32</acronym>
        <description>An autosomal dominant infertility disorder caused by spermatogenesis defects that result in non-obstructive azoospermia.</description>
        <dbReference type="MIM" id="618115"/>
    </disease>
    <text>The disease is caused by variants affecting the gene represented in this entry.</text>
</comment>
<comment type="disease" evidence="8">
    <disease id="DI-05092">
        <name>Ovarian dysgenesis 5</name>
        <acronym>ODG5</acronym>
        <description>A disorder characterized by lack of spontaneous pubertal development, primary amenorrhea, uterine hypoplasia, and hypergonadotropic hypogonadism as a result of streak gonads. ODG5 is an autosomal recessive condition.</description>
        <dbReference type="MIM" id="617690"/>
    </disease>
    <text>The disease is caused by variants affecting the gene represented in this entry.</text>
</comment>
<comment type="sequence caution" evidence="12">
    <conflict type="erroneous initiation">
        <sequence resource="EMBL-CDS" id="AAW78548"/>
    </conflict>
    <text>Extended N-terminus.</text>
</comment>
<gene>
    <name type="primary">SOHLH1</name>
    <name type="synonym">C9orf157</name>
    <name type="synonym">NOHLH</name>
    <name type="synonym">TEB2</name>
</gene>
<sequence>MASRCSEPYPEVSRIPTVRGCNGSLSGALSCCEDSARGSGPPKAPTVAEGPSSCLRRNVISERERRKRMSLSCERLRALLPQFDGRREDMASVLEMSVQFLRLASALGPSQEQHAILASSKEMWHSLQEDVLQLTLSSQIQAGVPDPGTGASSGTRTPDVKAFLESPWSLDPASASPEPVPHILASSRQWDPASCTSLGTDKCEALLGLCQVRGGLPPFSEPSSLVPWPPGRSLPKAVRPPLSWPPFSQQQTLPVMSGEALGWLGQAGPLAMGAAPLGEPAKEDPMLAQEAGSALGSDVDDGTSFLLTAGPSSWPGEWGPGFRAGPPA</sequence>
<proteinExistence type="evidence at protein level"/>
<dbReference type="EMBL" id="AY902244">
    <property type="protein sequence ID" value="AAW82617.1"/>
    <property type="molecule type" value="mRNA"/>
</dbReference>
<dbReference type="EMBL" id="AL158822">
    <property type="status" value="NOT_ANNOTATED_CDS"/>
    <property type="molecule type" value="Genomic_DNA"/>
</dbReference>
<dbReference type="EMBL" id="CH471090">
    <property type="protein sequence ID" value="EAW88175.1"/>
    <property type="molecule type" value="Genomic_DNA"/>
</dbReference>
<dbReference type="EMBL" id="BC031861">
    <property type="protein sequence ID" value="AAH31861.2"/>
    <property type="molecule type" value="mRNA"/>
</dbReference>
<dbReference type="EMBL" id="AY884306">
    <property type="protein sequence ID" value="AAW78548.1"/>
    <property type="status" value="ALT_INIT"/>
    <property type="molecule type" value="mRNA"/>
</dbReference>
<dbReference type="EMBL" id="DB304976">
    <property type="status" value="NOT_ANNOTATED_CDS"/>
    <property type="molecule type" value="mRNA"/>
</dbReference>
<dbReference type="CCDS" id="CCDS35174.1">
    <molecule id="Q5JUK2-1"/>
</dbReference>
<dbReference type="CCDS" id="CCDS48054.1">
    <molecule id="Q5JUK2-2"/>
</dbReference>
<dbReference type="RefSeq" id="NP_001012415.3">
    <molecule id="Q5JUK2-1"/>
    <property type="nucleotide sequence ID" value="NM_001012415.3"/>
</dbReference>
<dbReference type="RefSeq" id="NP_001095147.2">
    <molecule id="Q5JUK2-2"/>
    <property type="nucleotide sequence ID" value="NM_001101677.2"/>
</dbReference>
<dbReference type="BioGRID" id="135454">
    <property type="interactions" value="133"/>
</dbReference>
<dbReference type="FunCoup" id="Q5JUK2">
    <property type="interactions" value="139"/>
</dbReference>
<dbReference type="IntAct" id="Q5JUK2">
    <property type="interactions" value="112"/>
</dbReference>
<dbReference type="STRING" id="9606.ENSP00000404438"/>
<dbReference type="iPTMnet" id="Q5JUK2"/>
<dbReference type="PhosphoSitePlus" id="Q5JUK2"/>
<dbReference type="BioMuta" id="SOHLH1"/>
<dbReference type="DMDM" id="296453023"/>
<dbReference type="jPOST" id="Q5JUK2"/>
<dbReference type="MassIVE" id="Q5JUK2"/>
<dbReference type="PaxDb" id="9606-ENSP00000404438"/>
<dbReference type="PeptideAtlas" id="Q5JUK2"/>
<dbReference type="Antibodypedia" id="32071">
    <property type="antibodies" value="147 antibodies from 21 providers"/>
</dbReference>
<dbReference type="DNASU" id="402381"/>
<dbReference type="Ensembl" id="ENST00000298466.9">
    <molecule id="Q5JUK2-1"/>
    <property type="protein sequence ID" value="ENSP00000298466.5"/>
    <property type="gene ID" value="ENSG00000165643.11"/>
</dbReference>
<dbReference type="Ensembl" id="ENST00000425225.2">
    <molecule id="Q5JUK2-2"/>
    <property type="protein sequence ID" value="ENSP00000404438.1"/>
    <property type="gene ID" value="ENSG00000165643.11"/>
</dbReference>
<dbReference type="GeneID" id="402381"/>
<dbReference type="KEGG" id="hsa:402381"/>
<dbReference type="MANE-Select" id="ENST00000425225.2">
    <molecule id="Q5JUK2-2"/>
    <property type="protein sequence ID" value="ENSP00000404438.1"/>
    <property type="RefSeq nucleotide sequence ID" value="NM_001101677.2"/>
    <property type="RefSeq protein sequence ID" value="NP_001095147.2"/>
</dbReference>
<dbReference type="UCSC" id="uc004cgl.4">
    <molecule id="Q5JUK2-1"/>
    <property type="organism name" value="human"/>
</dbReference>
<dbReference type="AGR" id="HGNC:27845"/>
<dbReference type="CTD" id="402381"/>
<dbReference type="DisGeNET" id="402381"/>
<dbReference type="GeneCards" id="SOHLH1"/>
<dbReference type="HGNC" id="HGNC:27845">
    <property type="gene designation" value="SOHLH1"/>
</dbReference>
<dbReference type="HPA" id="ENSG00000165643">
    <property type="expression patterns" value="Group enriched (brain, testis)"/>
</dbReference>
<dbReference type="MalaCards" id="SOHLH1"/>
<dbReference type="MIM" id="610224">
    <property type="type" value="gene"/>
</dbReference>
<dbReference type="MIM" id="617690">
    <property type="type" value="phenotype"/>
</dbReference>
<dbReference type="MIM" id="618115">
    <property type="type" value="phenotype"/>
</dbReference>
<dbReference type="neXtProt" id="NX_Q5JUK2"/>
<dbReference type="OpenTargets" id="ENSG00000165643"/>
<dbReference type="Orphanet" id="399805">
    <property type="disease" value="Male infertility with azoospermia or oligozoospermia due to single gene mutation"/>
</dbReference>
<dbReference type="PharmGKB" id="PA134899168"/>
<dbReference type="VEuPathDB" id="HostDB:ENSG00000165643"/>
<dbReference type="eggNOG" id="ENOG502TDNY">
    <property type="taxonomic scope" value="Eukaryota"/>
</dbReference>
<dbReference type="GeneTree" id="ENSGT00390000000656"/>
<dbReference type="HOGENOM" id="CLU_066456_0_0_1"/>
<dbReference type="InParanoid" id="Q5JUK2"/>
<dbReference type="OMA" id="WQGDVLQ"/>
<dbReference type="OrthoDB" id="5966556at2759"/>
<dbReference type="PAN-GO" id="Q5JUK2">
    <property type="GO annotations" value="5 GO annotations based on evolutionary models"/>
</dbReference>
<dbReference type="PhylomeDB" id="Q5JUK2"/>
<dbReference type="TreeFam" id="TF336841"/>
<dbReference type="PathwayCommons" id="Q5JUK2"/>
<dbReference type="SignaLink" id="Q5JUK2"/>
<dbReference type="SIGNOR" id="Q5JUK2"/>
<dbReference type="BioGRID-ORCS" id="402381">
    <property type="hits" value="16 hits in 1168 CRISPR screens"/>
</dbReference>
<dbReference type="GenomeRNAi" id="402381"/>
<dbReference type="Pharos" id="Q5JUK2">
    <property type="development level" value="Tbio"/>
</dbReference>
<dbReference type="PRO" id="PR:Q5JUK2"/>
<dbReference type="Proteomes" id="UP000005640">
    <property type="component" value="Chromosome 9"/>
</dbReference>
<dbReference type="RNAct" id="Q5JUK2">
    <property type="molecule type" value="protein"/>
</dbReference>
<dbReference type="Bgee" id="ENSG00000165643">
    <property type="expression patterns" value="Expressed in right frontal lobe and 54 other cell types or tissues"/>
</dbReference>
<dbReference type="ExpressionAtlas" id="Q5JUK2">
    <property type="expression patterns" value="baseline and differential"/>
</dbReference>
<dbReference type="GO" id="GO:0000785">
    <property type="term" value="C:chromatin"/>
    <property type="evidence" value="ECO:0000247"/>
    <property type="project" value="NTNU_SB"/>
</dbReference>
<dbReference type="GO" id="GO:0005737">
    <property type="term" value="C:cytoplasm"/>
    <property type="evidence" value="ECO:0007669"/>
    <property type="project" value="UniProtKB-SubCell"/>
</dbReference>
<dbReference type="GO" id="GO:0005634">
    <property type="term" value="C:nucleus"/>
    <property type="evidence" value="ECO:0000318"/>
    <property type="project" value="GO_Central"/>
</dbReference>
<dbReference type="GO" id="GO:0000981">
    <property type="term" value="F:DNA-binding transcription factor activity, RNA polymerase II-specific"/>
    <property type="evidence" value="ECO:0000247"/>
    <property type="project" value="NTNU_SB"/>
</dbReference>
<dbReference type="GO" id="GO:0046982">
    <property type="term" value="F:protein heterodimerization activity"/>
    <property type="evidence" value="ECO:0000250"/>
    <property type="project" value="UniProtKB"/>
</dbReference>
<dbReference type="GO" id="GO:0042803">
    <property type="term" value="F:protein homodimerization activity"/>
    <property type="evidence" value="ECO:0000250"/>
    <property type="project" value="UniProtKB"/>
</dbReference>
<dbReference type="GO" id="GO:0000976">
    <property type="term" value="F:transcription cis-regulatory region binding"/>
    <property type="evidence" value="ECO:0000318"/>
    <property type="project" value="GO_Central"/>
</dbReference>
<dbReference type="GO" id="GO:0030154">
    <property type="term" value="P:cell differentiation"/>
    <property type="evidence" value="ECO:0000250"/>
    <property type="project" value="UniProtKB"/>
</dbReference>
<dbReference type="GO" id="GO:0009994">
    <property type="term" value="P:oocyte differentiation"/>
    <property type="evidence" value="ECO:0000250"/>
    <property type="project" value="UniProtKB"/>
</dbReference>
<dbReference type="GO" id="GO:0007283">
    <property type="term" value="P:spermatogenesis"/>
    <property type="evidence" value="ECO:0000250"/>
    <property type="project" value="UniProtKB"/>
</dbReference>
<dbReference type="CDD" id="cd18908">
    <property type="entry name" value="bHLH_SOHLH1_2"/>
    <property type="match status" value="1"/>
</dbReference>
<dbReference type="Gene3D" id="4.10.280.10">
    <property type="entry name" value="Helix-loop-helix DNA-binding domain"/>
    <property type="match status" value="1"/>
</dbReference>
<dbReference type="InterPro" id="IPR011598">
    <property type="entry name" value="bHLH_dom"/>
</dbReference>
<dbReference type="InterPro" id="IPR036638">
    <property type="entry name" value="HLH_DNA-bd_sf"/>
</dbReference>
<dbReference type="InterPro" id="IPR039583">
    <property type="entry name" value="TCFL5/SOLH1/2"/>
</dbReference>
<dbReference type="PANTHER" id="PTHR15402:SF4">
    <property type="entry name" value="SPERMATOGENESIS- AND OOGENESIS-SPECIFIC BASIC HELIX-LOOP-HELIX-CONTAINING PROTEIN 1"/>
    <property type="match status" value="1"/>
</dbReference>
<dbReference type="PANTHER" id="PTHR15402">
    <property type="entry name" value="TRANSCRIPTION FACTOR-LIKE 5 PROTEIN"/>
    <property type="match status" value="1"/>
</dbReference>
<dbReference type="Pfam" id="PF00010">
    <property type="entry name" value="HLH"/>
    <property type="match status" value="1"/>
</dbReference>
<dbReference type="SMART" id="SM00353">
    <property type="entry name" value="HLH"/>
    <property type="match status" value="1"/>
</dbReference>
<dbReference type="SUPFAM" id="SSF47459">
    <property type="entry name" value="HLH, helix-loop-helix DNA-binding domain"/>
    <property type="match status" value="1"/>
</dbReference>
<dbReference type="PROSITE" id="PS50888">
    <property type="entry name" value="BHLH"/>
    <property type="match status" value="1"/>
</dbReference>
<accession>Q5JUK2</accession>
<accession>C9JG81</accession>
<accession>Q5EE14</accession>
<accession>Q5EGC2</accession>
<accession>Q8NEE3</accession>
<protein>
    <recommendedName>
        <fullName>Spermatogenesis- and oogenesis-specific basic helix-loop-helix-containing protein 1</fullName>
    </recommendedName>
</protein>
<keyword id="KW-0025">Alternative splicing</keyword>
<keyword id="KW-0963">Cytoplasm</keyword>
<keyword id="KW-0217">Developmental protein</keyword>
<keyword id="KW-0221">Differentiation</keyword>
<keyword id="KW-0225">Disease variant</keyword>
<keyword id="KW-0238">DNA-binding</keyword>
<keyword id="KW-0539">Nucleus</keyword>
<keyword id="KW-1267">Proteomics identification</keyword>
<keyword id="KW-1185">Reference proteome</keyword>
<keyword id="KW-0744">Spermatogenesis</keyword>
<keyword id="KW-0804">Transcription</keyword>
<keyword id="KW-0805">Transcription regulation</keyword>
<name>SOLH1_HUMAN</name>
<evidence type="ECO:0000250" key="1">
    <source>
        <dbReference type="UniProtKB" id="Q6IUP1"/>
    </source>
</evidence>
<evidence type="ECO:0000250" key="2">
    <source>
        <dbReference type="UniProtKB" id="Q9D489"/>
    </source>
</evidence>
<evidence type="ECO:0000255" key="3">
    <source>
        <dbReference type="PROSITE-ProRule" id="PRU00981"/>
    </source>
</evidence>
<evidence type="ECO:0000256" key="4">
    <source>
        <dbReference type="SAM" id="MobiDB-lite"/>
    </source>
</evidence>
<evidence type="ECO:0000269" key="5">
    <source>
    </source>
</evidence>
<evidence type="ECO:0000269" key="6">
    <source>
    </source>
</evidence>
<evidence type="ECO:0000269" key="7">
    <source>
    </source>
</evidence>
<evidence type="ECO:0000269" key="8">
    <source>
    </source>
</evidence>
<evidence type="ECO:0000269" key="9">
    <source>
    </source>
</evidence>
<evidence type="ECO:0000269" key="10">
    <source ref="3"/>
</evidence>
<evidence type="ECO:0000303" key="11">
    <source>
    </source>
</evidence>
<evidence type="ECO:0000305" key="12"/>
<feature type="chain" id="PRO_0000315698" description="Spermatogenesis- and oogenesis-specific basic helix-loop-helix-containing protein 1">
    <location>
        <begin position="1"/>
        <end position="328"/>
    </location>
</feature>
<feature type="domain" description="bHLH" evidence="3">
    <location>
        <begin position="53"/>
        <end position="104"/>
    </location>
</feature>
<feature type="region of interest" description="Disordered" evidence="4">
    <location>
        <begin position="290"/>
        <end position="328"/>
    </location>
</feature>
<feature type="compositionally biased region" description="Low complexity" evidence="4">
    <location>
        <begin position="310"/>
        <end position="321"/>
    </location>
</feature>
<feature type="splice variant" id="VSP_039904" description="In isoform 2." evidence="11">
    <original>EWGPGFRAGPPA</original>
    <variation>SLEGRGGSGPAWAPAESSPLDVGEPGFLGDPELGSQELQDSPLEPWGLDVDCAGLALKDEVESIFPDFFAC</variation>
    <location>
        <begin position="317"/>
        <end position="328"/>
    </location>
</feature>
<feature type="sequence variant" id="VAR_080221" description="In ODG5." evidence="8">
    <location>
        <begin position="9"/>
        <end position="328"/>
    </location>
</feature>
<feature type="sequence variant" id="VAR_064060" description="In SPGF32; uncertain significance; does not have any significant effect on its transactivation; dbSNP:rs199935200." evidence="7">
    <original>C</original>
    <variation>R</variation>
    <location>
        <position position="31"/>
    </location>
</feature>
<feature type="sequence variant" id="VAR_038281" description="In dbSNP:rs471525." evidence="5 6 7 10">
    <original>R</original>
    <variation>Q</variation>
    <location>
        <position position="37"/>
    </location>
</feature>
<feature type="sequence variant" id="VAR_064061" description="In SPGF32; uncertain significance; does not have any significant effect on its transactivation; dbSNP:rs201142743." evidence="7">
    <original>P</original>
    <variation>T</variation>
    <location>
        <position position="177"/>
    </location>
</feature>
<feature type="sequence variant" id="VAR_038282" description="In dbSNP:rs3119932." evidence="5 6 7 10">
    <original>P</original>
    <variation>S</variation>
    <location>
        <position position="269"/>
    </location>
</feature>
<feature type="sequence conflict" description="In Ref. 6; DB304976." evidence="12" ref="6">
    <original>S</original>
    <variation>F</variation>
    <location>
        <position position="293"/>
    </location>
</feature>
<organism>
    <name type="scientific">Homo sapiens</name>
    <name type="common">Human</name>
    <dbReference type="NCBI Taxonomy" id="9606"/>
    <lineage>
        <taxon>Eukaryota</taxon>
        <taxon>Metazoa</taxon>
        <taxon>Chordata</taxon>
        <taxon>Craniata</taxon>
        <taxon>Vertebrata</taxon>
        <taxon>Euteleostomi</taxon>
        <taxon>Mammalia</taxon>
        <taxon>Eutheria</taxon>
        <taxon>Euarchontoglires</taxon>
        <taxon>Primates</taxon>
        <taxon>Haplorrhini</taxon>
        <taxon>Catarrhini</taxon>
        <taxon>Hominidae</taxon>
        <taxon>Homo</taxon>
    </lineage>
</organism>